<keyword id="KW-0010">Activator</keyword>
<keyword id="KW-0217">Developmental protein</keyword>
<keyword id="KW-0238">DNA-binding</keyword>
<keyword id="KW-1017">Isopeptide bond</keyword>
<keyword id="KW-0479">Metal-binding</keyword>
<keyword id="KW-0539">Nucleus</keyword>
<keyword id="KW-0597">Phosphoprotein</keyword>
<keyword id="KW-1185">Reference proteome</keyword>
<keyword id="KW-0677">Repeat</keyword>
<keyword id="KW-0804">Transcription</keyword>
<keyword id="KW-0805">Transcription regulation</keyword>
<keyword id="KW-0832">Ubl conjugation</keyword>
<keyword id="KW-0862">Zinc</keyword>
<keyword id="KW-0863">Zinc-finger</keyword>
<gene>
    <name type="primary">Znf335</name>
    <name type="synonym">Zfp335</name>
</gene>
<reference key="1">
    <citation type="submission" date="2005-09" db="EMBL/GenBank/DDBJ databases">
        <authorList>
            <person name="Mural R.J."/>
            <person name="Adams M.D."/>
            <person name="Myers E.W."/>
            <person name="Smith H.O."/>
            <person name="Venter J.C."/>
        </authorList>
    </citation>
    <scope>NUCLEOTIDE SEQUENCE [LARGE SCALE GENOMIC DNA]</scope>
</reference>
<reference key="2">
    <citation type="journal article" date="2002" name="Mol. Cell. Biol.">
        <title>NRC-interacting factor 1 is a novel cotransducer that interacts with and regulates the activity of the nuclear hormone receptor coactivator NRC.</title>
        <authorList>
            <person name="Mahajan M.A."/>
            <person name="Murray A."/>
            <person name="Samuels H.H."/>
        </authorList>
    </citation>
    <scope>NUCLEOTIDE SEQUENCE [MRNA] OF 514-1336</scope>
    <scope>INTERACTION WITH NCOA6</scope>
    <source>
        <strain>Wistar Furth</strain>
        <tissue>Pituitary</tissue>
    </source>
</reference>
<reference key="3">
    <citation type="journal article" date="2008" name="J. Biol. Chem.">
        <title>Components of the CCR4-NOT complex function as nuclear hormone receptor coactivators via association with the NRC-interacting Factor NIF-1.</title>
        <authorList>
            <person name="Garapaty S."/>
            <person name="Mahajan M.A."/>
            <person name="Samuels H.H."/>
        </authorList>
    </citation>
    <scope>INTERACTION WITH CNOT9</scope>
</reference>
<reference key="4">
    <citation type="journal article" date="2012" name="Nat. Commun.">
        <title>Quantitative maps of protein phosphorylation sites across 14 different rat organs and tissues.</title>
        <authorList>
            <person name="Lundby A."/>
            <person name="Secher A."/>
            <person name="Lage K."/>
            <person name="Nordsborg N.B."/>
            <person name="Dmytriyev A."/>
            <person name="Lundby C."/>
            <person name="Olsen J.V."/>
        </authorList>
    </citation>
    <scope>PHOSPHORYLATION [LARGE SCALE ANALYSIS] AT SER-975</scope>
    <scope>IDENTIFICATION BY MASS SPECTROMETRY [LARGE SCALE ANALYSIS]</scope>
</reference>
<dbReference type="EMBL" id="CH474005">
    <property type="protein sequence ID" value="EDL96481.1"/>
    <property type="molecule type" value="Genomic_DNA"/>
</dbReference>
<dbReference type="EMBL" id="AY079168">
    <property type="protein sequence ID" value="AAL86014.1"/>
    <property type="molecule type" value="mRNA"/>
</dbReference>
<dbReference type="RefSeq" id="XP_008760786.1">
    <property type="nucleotide sequence ID" value="XM_008762564.2"/>
</dbReference>
<dbReference type="RefSeq" id="XP_008773840.1">
    <property type="nucleotide sequence ID" value="XM_008775618.2"/>
</dbReference>
<dbReference type="SMR" id="G3V893"/>
<dbReference type="FunCoup" id="G3V893">
    <property type="interactions" value="2273"/>
</dbReference>
<dbReference type="STRING" id="10116.ENSRNOP00000023523"/>
<dbReference type="GlyGen" id="G3V893">
    <property type="glycosylation" value="2 sites"/>
</dbReference>
<dbReference type="iPTMnet" id="G3V893"/>
<dbReference type="PhosphoSitePlus" id="G3V893"/>
<dbReference type="PaxDb" id="10116-ENSRNOP00000023523"/>
<dbReference type="Ensembl" id="ENSRNOT00000110042.1">
    <property type="protein sequence ID" value="ENSRNOP00000097203.1"/>
    <property type="gene ID" value="ENSRNOG00000017290.9"/>
</dbReference>
<dbReference type="AGR" id="RGD:628751"/>
<dbReference type="RGD" id="628751">
    <property type="gene designation" value="Zfp335"/>
</dbReference>
<dbReference type="eggNOG" id="KOG1721">
    <property type="taxonomic scope" value="Eukaryota"/>
</dbReference>
<dbReference type="GeneTree" id="ENSGT00940000158508"/>
<dbReference type="HOGENOM" id="CLU_006340_0_0_1"/>
<dbReference type="InParanoid" id="G3V893"/>
<dbReference type="TreeFam" id="TF332472"/>
<dbReference type="PRO" id="PR:G3V893"/>
<dbReference type="Proteomes" id="UP000002494">
    <property type="component" value="Chromosome 3"/>
</dbReference>
<dbReference type="Proteomes" id="UP000234681">
    <property type="component" value="Chromosome 3"/>
</dbReference>
<dbReference type="GO" id="GO:0035097">
    <property type="term" value="C:histone methyltransferase complex"/>
    <property type="evidence" value="ECO:0000266"/>
    <property type="project" value="RGD"/>
</dbReference>
<dbReference type="GO" id="GO:0005634">
    <property type="term" value="C:nucleus"/>
    <property type="evidence" value="ECO:0000250"/>
    <property type="project" value="UniProtKB"/>
</dbReference>
<dbReference type="GO" id="GO:1990226">
    <property type="term" value="F:histone methyltransferase binding"/>
    <property type="evidence" value="ECO:0000266"/>
    <property type="project" value="RGD"/>
</dbReference>
<dbReference type="GO" id="GO:0000978">
    <property type="term" value="F:RNA polymerase II cis-regulatory region sequence-specific DNA binding"/>
    <property type="evidence" value="ECO:0000266"/>
    <property type="project" value="RGD"/>
</dbReference>
<dbReference type="GO" id="GO:0000976">
    <property type="term" value="F:transcription cis-regulatory region binding"/>
    <property type="evidence" value="ECO:0000250"/>
    <property type="project" value="UniProtKB"/>
</dbReference>
<dbReference type="GO" id="GO:0003713">
    <property type="term" value="F:transcription coactivator activity"/>
    <property type="evidence" value="ECO:0000250"/>
    <property type="project" value="UniProtKB"/>
</dbReference>
<dbReference type="GO" id="GO:0008270">
    <property type="term" value="F:zinc ion binding"/>
    <property type="evidence" value="ECO:0007669"/>
    <property type="project" value="UniProtKB-KW"/>
</dbReference>
<dbReference type="GO" id="GO:0007420">
    <property type="term" value="P:brain development"/>
    <property type="evidence" value="ECO:0000250"/>
    <property type="project" value="UniProtKB"/>
</dbReference>
<dbReference type="GO" id="GO:0048854">
    <property type="term" value="P:brain morphogenesis"/>
    <property type="evidence" value="ECO:0000266"/>
    <property type="project" value="RGD"/>
</dbReference>
<dbReference type="GO" id="GO:0021895">
    <property type="term" value="P:cerebral cortex neuron differentiation"/>
    <property type="evidence" value="ECO:0000266"/>
    <property type="project" value="RGD"/>
</dbReference>
<dbReference type="GO" id="GO:0040029">
    <property type="term" value="P:epigenetic regulation of gene expression"/>
    <property type="evidence" value="ECO:0000250"/>
    <property type="project" value="UniProtKB"/>
</dbReference>
<dbReference type="GO" id="GO:0001701">
    <property type="term" value="P:in utero embryonic development"/>
    <property type="evidence" value="ECO:0000266"/>
    <property type="project" value="RGD"/>
</dbReference>
<dbReference type="GO" id="GO:0048812">
    <property type="term" value="P:neuron projection morphogenesis"/>
    <property type="evidence" value="ECO:0000250"/>
    <property type="project" value="UniProtKB"/>
</dbReference>
<dbReference type="GO" id="GO:0050671">
    <property type="term" value="P:positive regulation of lymphocyte proliferation"/>
    <property type="evidence" value="ECO:0000250"/>
    <property type="project" value="UniProtKB"/>
</dbReference>
<dbReference type="GO" id="GO:0002052">
    <property type="term" value="P:positive regulation of neuroblast proliferation"/>
    <property type="evidence" value="ECO:0000250"/>
    <property type="project" value="UniProtKB"/>
</dbReference>
<dbReference type="GO" id="GO:0050769">
    <property type="term" value="P:positive regulation of neurogenesis"/>
    <property type="evidence" value="ECO:0000266"/>
    <property type="project" value="RGD"/>
</dbReference>
<dbReference type="GO" id="GO:0045944">
    <property type="term" value="P:positive regulation of transcription by RNA polymerase II"/>
    <property type="evidence" value="ECO:0000318"/>
    <property type="project" value="GO_Central"/>
</dbReference>
<dbReference type="GO" id="GO:0010468">
    <property type="term" value="P:regulation of gene expression"/>
    <property type="evidence" value="ECO:0000266"/>
    <property type="project" value="RGD"/>
</dbReference>
<dbReference type="GO" id="GO:0050767">
    <property type="term" value="P:regulation of neurogenesis"/>
    <property type="evidence" value="ECO:0000266"/>
    <property type="project" value="RGD"/>
</dbReference>
<dbReference type="FunFam" id="3.30.160.60:FF:000444">
    <property type="entry name" value="Zinc finger protein 335"/>
    <property type="match status" value="1"/>
</dbReference>
<dbReference type="FunFam" id="3.30.160.60:FF:000764">
    <property type="entry name" value="Zinc finger protein 335"/>
    <property type="match status" value="1"/>
</dbReference>
<dbReference type="FunFam" id="3.30.160.60:FF:000796">
    <property type="entry name" value="Zinc finger protein 335"/>
    <property type="match status" value="1"/>
</dbReference>
<dbReference type="FunFam" id="3.30.160.60:FF:000930">
    <property type="entry name" value="Zinc finger protein 335"/>
    <property type="match status" value="1"/>
</dbReference>
<dbReference type="FunFam" id="3.30.160.60:FF:003059">
    <property type="entry name" value="Zinc finger protein 335"/>
    <property type="match status" value="1"/>
</dbReference>
<dbReference type="Gene3D" id="3.30.160.60">
    <property type="entry name" value="Classic Zinc Finger"/>
    <property type="match status" value="7"/>
</dbReference>
<dbReference type="InterPro" id="IPR050688">
    <property type="entry name" value="Zinc_finger/UBP_domain"/>
</dbReference>
<dbReference type="InterPro" id="IPR036236">
    <property type="entry name" value="Znf_C2H2_sf"/>
</dbReference>
<dbReference type="InterPro" id="IPR013087">
    <property type="entry name" value="Znf_C2H2_type"/>
</dbReference>
<dbReference type="PANTHER" id="PTHR24403">
    <property type="entry name" value="ZINC FINGER PROTEIN"/>
    <property type="match status" value="1"/>
</dbReference>
<dbReference type="PANTHER" id="PTHR24403:SF36">
    <property type="entry name" value="ZINC FINGER PROTEIN 335"/>
    <property type="match status" value="1"/>
</dbReference>
<dbReference type="Pfam" id="PF00096">
    <property type="entry name" value="zf-C2H2"/>
    <property type="match status" value="2"/>
</dbReference>
<dbReference type="Pfam" id="PF13912">
    <property type="entry name" value="zf-C2H2_6"/>
    <property type="match status" value="2"/>
</dbReference>
<dbReference type="Pfam" id="PF13909">
    <property type="entry name" value="zf-H2C2_5"/>
    <property type="match status" value="1"/>
</dbReference>
<dbReference type="SMART" id="SM00355">
    <property type="entry name" value="ZnF_C2H2"/>
    <property type="match status" value="13"/>
</dbReference>
<dbReference type="SUPFAM" id="SSF57667">
    <property type="entry name" value="beta-beta-alpha zinc fingers"/>
    <property type="match status" value="7"/>
</dbReference>
<dbReference type="PROSITE" id="PS00028">
    <property type="entry name" value="ZINC_FINGER_C2H2_1"/>
    <property type="match status" value="6"/>
</dbReference>
<dbReference type="PROSITE" id="PS50157">
    <property type="entry name" value="ZINC_FINGER_C2H2_2"/>
    <property type="match status" value="13"/>
</dbReference>
<feature type="chain" id="PRO_0000419260" description="Zinc finger protein 335">
    <location>
        <begin position="1"/>
        <end position="1336"/>
    </location>
</feature>
<feature type="zinc finger region" description="C2H2-type 1" evidence="3">
    <location>
        <begin position="247"/>
        <end position="270"/>
    </location>
</feature>
<feature type="zinc finger region" description="C2H2-type 2" evidence="3">
    <location>
        <begin position="465"/>
        <end position="487"/>
    </location>
</feature>
<feature type="zinc finger region" description="C2H2-type 3" evidence="3">
    <location>
        <begin position="495"/>
        <end position="517"/>
    </location>
</feature>
<feature type="zinc finger region" description="C2H2-type 4" evidence="3">
    <location>
        <begin position="523"/>
        <end position="545"/>
    </location>
</feature>
<feature type="zinc finger region" description="C2H2-type 5" evidence="3">
    <location>
        <begin position="562"/>
        <end position="584"/>
    </location>
</feature>
<feature type="zinc finger region" description="C2H2-type 6" evidence="3">
    <location>
        <begin position="590"/>
        <end position="612"/>
    </location>
</feature>
<feature type="zinc finger region" description="C2H2-type 7" evidence="3">
    <location>
        <begin position="621"/>
        <end position="643"/>
    </location>
</feature>
<feature type="zinc finger region" description="C2H2-type 8" evidence="3">
    <location>
        <begin position="649"/>
        <end position="672"/>
    </location>
</feature>
<feature type="zinc finger region" description="C2H2-type 9" evidence="3">
    <location>
        <begin position="678"/>
        <end position="701"/>
    </location>
</feature>
<feature type="zinc finger region" description="C2H2-type 10" evidence="3">
    <location>
        <begin position="1018"/>
        <end position="1040"/>
    </location>
</feature>
<feature type="zinc finger region" description="C2H2-type 11" evidence="3">
    <location>
        <begin position="1046"/>
        <end position="1068"/>
    </location>
</feature>
<feature type="zinc finger region" description="C2H2-type 12" evidence="3">
    <location>
        <begin position="1074"/>
        <end position="1096"/>
    </location>
</feature>
<feature type="zinc finger region" description="C2H2-type 13" evidence="3">
    <location>
        <begin position="1102"/>
        <end position="1125"/>
    </location>
</feature>
<feature type="region of interest" description="Disordered" evidence="4">
    <location>
        <begin position="1"/>
        <end position="108"/>
    </location>
</feature>
<feature type="region of interest" description="Disordered" evidence="4">
    <location>
        <begin position="199"/>
        <end position="222"/>
    </location>
</feature>
<feature type="region of interest" description="Disordered" evidence="4">
    <location>
        <begin position="282"/>
        <end position="398"/>
    </location>
</feature>
<feature type="region of interest" description="Disordered" evidence="4">
    <location>
        <begin position="415"/>
        <end position="442"/>
    </location>
</feature>
<feature type="region of interest" description="Disordered" evidence="4">
    <location>
        <begin position="732"/>
        <end position="766"/>
    </location>
</feature>
<feature type="region of interest" description="Disordered" evidence="4">
    <location>
        <begin position="961"/>
        <end position="1013"/>
    </location>
</feature>
<feature type="compositionally biased region" description="Low complexity" evidence="4">
    <location>
        <begin position="31"/>
        <end position="45"/>
    </location>
</feature>
<feature type="compositionally biased region" description="Low complexity" evidence="4">
    <location>
        <begin position="54"/>
        <end position="65"/>
    </location>
</feature>
<feature type="compositionally biased region" description="Acidic residues" evidence="4">
    <location>
        <begin position="300"/>
        <end position="331"/>
    </location>
</feature>
<feature type="compositionally biased region" description="Low complexity" evidence="4">
    <location>
        <begin position="339"/>
        <end position="349"/>
    </location>
</feature>
<feature type="compositionally biased region" description="Basic residues" evidence="4">
    <location>
        <begin position="350"/>
        <end position="361"/>
    </location>
</feature>
<feature type="compositionally biased region" description="Basic and acidic residues" evidence="4">
    <location>
        <begin position="362"/>
        <end position="373"/>
    </location>
</feature>
<feature type="compositionally biased region" description="Polar residues" evidence="4">
    <location>
        <begin position="378"/>
        <end position="387"/>
    </location>
</feature>
<feature type="compositionally biased region" description="Pro residues" evidence="4">
    <location>
        <begin position="752"/>
        <end position="766"/>
    </location>
</feature>
<feature type="modified residue" description="Phosphoserine" evidence="7">
    <location>
        <position position="975"/>
    </location>
</feature>
<feature type="modified residue" description="Phosphoserine" evidence="2">
    <location>
        <position position="1006"/>
    </location>
</feature>
<feature type="modified residue" description="Phosphoserine" evidence="2">
    <location>
        <position position="1148"/>
    </location>
</feature>
<feature type="cross-link" description="Glycyl lysine isopeptide (Lys-Gly) (interchain with G-Cter in SUMO2)" evidence="2">
    <location>
        <position position="1021"/>
    </location>
</feature>
<feature type="sequence conflict" description="In Ref. 2; AAL86014." evidence="6" ref="2">
    <original>F</original>
    <variation>I</variation>
    <location>
        <position position="723"/>
    </location>
</feature>
<feature type="sequence conflict" description="In Ref. 2; AAL86014." evidence="6" ref="2">
    <original>E</original>
    <variation>K</variation>
    <location>
        <position position="731"/>
    </location>
</feature>
<feature type="sequence conflict" description="In Ref. 2; AAL86014." evidence="6" ref="2">
    <original>P</original>
    <variation>S</variation>
    <location>
        <position position="760"/>
    </location>
</feature>
<feature type="sequence conflict" description="In Ref. 2; AAL86014." evidence="6" ref="2">
    <location>
        <position position="1295"/>
    </location>
</feature>
<accession>G3V893</accession>
<accession>Q8CIV9</accession>
<protein>
    <recommendedName>
        <fullName>Zinc finger protein 335</fullName>
    </recommendedName>
    <alternativeName>
        <fullName>NRC-interacting factor 1</fullName>
        <shortName>NIF-1</shortName>
    </alternativeName>
</protein>
<name>ZN335_RAT</name>
<organism>
    <name type="scientific">Rattus norvegicus</name>
    <name type="common">Rat</name>
    <dbReference type="NCBI Taxonomy" id="10116"/>
    <lineage>
        <taxon>Eukaryota</taxon>
        <taxon>Metazoa</taxon>
        <taxon>Chordata</taxon>
        <taxon>Craniata</taxon>
        <taxon>Vertebrata</taxon>
        <taxon>Euteleostomi</taxon>
        <taxon>Mammalia</taxon>
        <taxon>Eutheria</taxon>
        <taxon>Euarchontoglires</taxon>
        <taxon>Glires</taxon>
        <taxon>Rodentia</taxon>
        <taxon>Myomorpha</taxon>
        <taxon>Muroidea</taxon>
        <taxon>Muridae</taxon>
        <taxon>Murinae</taxon>
        <taxon>Rattus</taxon>
    </lineage>
</organism>
<sequence length="1336" mass="145536">MEENEVESSSDAAPRPGQPEEPSESGLGVGTSEAVSADSTDAATAPGLTEADDSGVGQSSDSGSRSVEEVSESISTEPLPQGYLPDSSSVSRGPVAEVPGGPPALVHSSALPDPSMLVSDCTASSSDLGSAIDKIIESTIGPDLIQSCITVTSGEEGGAETTQYLILQGPDDGAPMASSMSTSTLANSLAAIEALADGPTSTSTCLEPAEQPPGEPSSLAQPPAPVVEELDLQGLEAMMEVVVVQQFKCKMCQYRSSTKATLLRHMRERHFRPALAVAAAAAGKRGRVRKWGTSTKTTEEEGPEEEEEDDDIVDAGAIDDLEEDSDYNPAEDEPRGRQLRLQRPTPSTLRPRRRPGRPRKLPRLETSDLHDGIGEPLVSSQSTQSPPELQDLEAPSSSDLRALGKVGRGLVETGVSQSDAENAAPSCQDEADVPPRRRGRPSRRFLGKKYRKYYYKSPKPLLRPYLCRICGSRFLSHEDLRFHVNSHEAGDPQLFKCLQCSYRSRRWSSLKEHMFNHVGSKPYKCDECSYTSVYRKDVIRHAAVHSQDRKKRPDPTPKLSSFPCPVCGRVYPMQKRLTQHMKTHSTEKPHMCDKCGKSFKKRYTFKMHLLTHIQAVANRRFKCEFCEFVCEDKKALLNHQLSHVSDKPFKCSFCPYRTFREDFLLSHVAVKHTGAKPFACEYCHFSTRHKKNLRLHVRCRHANSFEEWGRRHPEEPPSRRRPFFSLQQIEELKQQHSAAPGPPLSSAGPEAPQEPAPFQPPETPPLLCPDALGGATIIYQQGAEESTAMATQTALDLLLNMSAQRELGATALQVAVVKSEDVEAELTSTARQPSSEDTTPRVVTLHVAESGSSVAAESQLGPSDLQQIALPPGPFSGASYSVITAPPVEGRASASGPPYREEPPGEAAQAVVVNDTLKEAGTHYIMAADGTQLHHIELTADGSISFPSPDTLAPGTKWPLLQCGGPPRDGPEVLSPTKTHHTGGSQGSSTPPPATSHALGLLVPHSPPSAAASSTKKFSCKVCSEAFPSRAEMESHKRAHAGPAAFKCPDCPFSARQWPEVRAHMAQHSSLRPHQCNQCSFASKNKKDLRRHMLTHTNEKPFSCHVCGQRFNRNGHLKFHIQRLHSIDGRKTGTSTARAPAQTIILNSEEETLATLHTAFQSNHGTLGTERLQQALSQEHIIVAQEQTVANQEEATYIQEITADGQTVQHLVTSDNQVQYIISQDGVQHLLPQEYVVVPDGHHIQVQEGQITHIQYEQGTPFLQESQIQYVPVSPSQQLVTQAQLEAAAHSAVTAVADAAMAQAQGLFGTEEAVPEHIQQLQHQGIEYDVITLSDD</sequence>
<comment type="function">
    <text evidence="2">Component or associated component of some histone methyltransferase complexes may regulate transcription through recruitment of those complexes on gene promoters (By similarity). Enhances ligand-dependent transcriptional activation by nuclear hormone receptors (By similarity). Plays an important role in neural progenitor cell proliferation and self-renewal through the regulation of specific genes involved brain development, including REST (By similarity). Also controls the expression of genes involved in somatic development and regulates, for instance, lymphoblast proliferation (By similarity).</text>
</comment>
<comment type="subunit">
    <text evidence="2 5">Interacts with NCOA6; may enhance ligand-dependent transcriptional activation by nuclear hormone receptors (By similarity). Interacts with CNOT6 (By similarity). Interacts with CNOT9; the interaction is direct (PubMed:18180299). Component of a nuclear receptor-mediated transcription complex composed of at least ZNF335, CCAR2 and EMSY; the complex stimulates the transcription of nuclear receptor target genes such as SOX9 and HOXA1 (By similarity). Within the complex interacts with EMSY and interacts (via C-terminus) with CCAR2 (By similarity). Interacts with members of histone H3'Lys4'(H3K4) methyltransferase complexes ASH2L, CXXC1, KMT2A/MLL1, RBBP5, SETD1A and WDR5 (By similarity). Component of a histone methylation complex composed of at least ZNF335, RBBP5, ASH2L and WDR5; the complex may have histone H3-specific methyltransferase activity, however does not have specificity for 'Lys-4' of histone H3 (By similarity). Interacts with RBBP5 and WDR5 (By similarity). Interacts with ASHL2 (By similarity). Components of this complex may associate with components of the ZNF335-CCAR2-EMSY nuclear receptor-mediated transcription complex to form a complex at least composed of ZNF335, HCFC1, CCAR2, EMSY, MKI67, RBBP5, ASH2L and WDR5 (By similarity). Within this complex also interacts with HCFC1 and MKI67 (By similarity).</text>
</comment>
<comment type="subcellular location">
    <subcellularLocation>
        <location evidence="1">Nucleus</location>
    </subcellularLocation>
</comment>
<comment type="similarity">
    <text evidence="6">Belongs to the krueppel C2H2-type zinc-finger protein family.</text>
</comment>
<evidence type="ECO:0000250" key="1"/>
<evidence type="ECO:0000250" key="2">
    <source>
        <dbReference type="UniProtKB" id="Q9H4Z2"/>
    </source>
</evidence>
<evidence type="ECO:0000255" key="3">
    <source>
        <dbReference type="PROSITE-ProRule" id="PRU00042"/>
    </source>
</evidence>
<evidence type="ECO:0000256" key="4">
    <source>
        <dbReference type="SAM" id="MobiDB-lite"/>
    </source>
</evidence>
<evidence type="ECO:0000269" key="5">
    <source>
    </source>
</evidence>
<evidence type="ECO:0000305" key="6"/>
<evidence type="ECO:0007744" key="7">
    <source>
    </source>
</evidence>
<proteinExistence type="evidence at protein level"/>